<name>EFTS_BORBR</name>
<proteinExistence type="inferred from homology"/>
<evidence type="ECO:0000255" key="1">
    <source>
        <dbReference type="HAMAP-Rule" id="MF_00050"/>
    </source>
</evidence>
<evidence type="ECO:0000305" key="2"/>
<dbReference type="EMBL" id="BX640444">
    <property type="protein sequence ID" value="CAE33099.1"/>
    <property type="status" value="ALT_INIT"/>
    <property type="molecule type" value="Genomic_DNA"/>
</dbReference>
<dbReference type="RefSeq" id="WP_010926570.1">
    <property type="nucleotide sequence ID" value="NC_002927.3"/>
</dbReference>
<dbReference type="SMR" id="Q7WJ93"/>
<dbReference type="GeneID" id="69601331"/>
<dbReference type="KEGG" id="bbr:BB2606"/>
<dbReference type="eggNOG" id="COG0264">
    <property type="taxonomic scope" value="Bacteria"/>
</dbReference>
<dbReference type="HOGENOM" id="CLU_047155_0_2_4"/>
<dbReference type="Proteomes" id="UP000001027">
    <property type="component" value="Chromosome"/>
</dbReference>
<dbReference type="GO" id="GO:0005737">
    <property type="term" value="C:cytoplasm"/>
    <property type="evidence" value="ECO:0007669"/>
    <property type="project" value="UniProtKB-SubCell"/>
</dbReference>
<dbReference type="GO" id="GO:0003746">
    <property type="term" value="F:translation elongation factor activity"/>
    <property type="evidence" value="ECO:0007669"/>
    <property type="project" value="UniProtKB-UniRule"/>
</dbReference>
<dbReference type="CDD" id="cd14275">
    <property type="entry name" value="UBA_EF-Ts"/>
    <property type="match status" value="1"/>
</dbReference>
<dbReference type="FunFam" id="1.10.286.20:FF:000001">
    <property type="entry name" value="Elongation factor Ts"/>
    <property type="match status" value="1"/>
</dbReference>
<dbReference type="FunFam" id="1.10.8.10:FF:000001">
    <property type="entry name" value="Elongation factor Ts"/>
    <property type="match status" value="1"/>
</dbReference>
<dbReference type="Gene3D" id="1.10.286.20">
    <property type="match status" value="1"/>
</dbReference>
<dbReference type="Gene3D" id="1.10.8.10">
    <property type="entry name" value="DNA helicase RuvA subunit, C-terminal domain"/>
    <property type="match status" value="1"/>
</dbReference>
<dbReference type="Gene3D" id="3.30.479.20">
    <property type="entry name" value="Elongation factor Ts, dimerisation domain"/>
    <property type="match status" value="2"/>
</dbReference>
<dbReference type="HAMAP" id="MF_00050">
    <property type="entry name" value="EF_Ts"/>
    <property type="match status" value="1"/>
</dbReference>
<dbReference type="InterPro" id="IPR036402">
    <property type="entry name" value="EF-Ts_dimer_sf"/>
</dbReference>
<dbReference type="InterPro" id="IPR001816">
    <property type="entry name" value="Transl_elong_EFTs/EF1B"/>
</dbReference>
<dbReference type="InterPro" id="IPR014039">
    <property type="entry name" value="Transl_elong_EFTs/EF1B_dimer"/>
</dbReference>
<dbReference type="InterPro" id="IPR018101">
    <property type="entry name" value="Transl_elong_Ts_CS"/>
</dbReference>
<dbReference type="InterPro" id="IPR009060">
    <property type="entry name" value="UBA-like_sf"/>
</dbReference>
<dbReference type="NCBIfam" id="TIGR00116">
    <property type="entry name" value="tsf"/>
    <property type="match status" value="1"/>
</dbReference>
<dbReference type="PANTHER" id="PTHR11741">
    <property type="entry name" value="ELONGATION FACTOR TS"/>
    <property type="match status" value="1"/>
</dbReference>
<dbReference type="PANTHER" id="PTHR11741:SF0">
    <property type="entry name" value="ELONGATION FACTOR TS, MITOCHONDRIAL"/>
    <property type="match status" value="1"/>
</dbReference>
<dbReference type="Pfam" id="PF00889">
    <property type="entry name" value="EF_TS"/>
    <property type="match status" value="1"/>
</dbReference>
<dbReference type="SUPFAM" id="SSF54713">
    <property type="entry name" value="Elongation factor Ts (EF-Ts), dimerisation domain"/>
    <property type="match status" value="2"/>
</dbReference>
<dbReference type="SUPFAM" id="SSF46934">
    <property type="entry name" value="UBA-like"/>
    <property type="match status" value="1"/>
</dbReference>
<dbReference type="PROSITE" id="PS01127">
    <property type="entry name" value="EF_TS_2"/>
    <property type="match status" value="1"/>
</dbReference>
<comment type="function">
    <text evidence="1">Associates with the EF-Tu.GDP complex and induces the exchange of GDP to GTP. It remains bound to the aminoacyl-tRNA.EF-Tu.GTP complex up to the GTP hydrolysis stage on the ribosome.</text>
</comment>
<comment type="subcellular location">
    <subcellularLocation>
        <location evidence="1">Cytoplasm</location>
    </subcellularLocation>
</comment>
<comment type="similarity">
    <text evidence="1">Belongs to the EF-Ts family.</text>
</comment>
<comment type="sequence caution" evidence="2">
    <conflict type="erroneous initiation">
        <sequence resource="EMBL-CDS" id="CAE33099"/>
    </conflict>
</comment>
<keyword id="KW-0963">Cytoplasm</keyword>
<keyword id="KW-0251">Elongation factor</keyword>
<keyword id="KW-0648">Protein biosynthesis</keyword>
<organism>
    <name type="scientific">Bordetella bronchiseptica (strain ATCC BAA-588 / NCTC 13252 / RB50)</name>
    <name type="common">Alcaligenes bronchisepticus</name>
    <dbReference type="NCBI Taxonomy" id="257310"/>
    <lineage>
        <taxon>Bacteria</taxon>
        <taxon>Pseudomonadati</taxon>
        <taxon>Pseudomonadota</taxon>
        <taxon>Betaproteobacteria</taxon>
        <taxon>Burkholderiales</taxon>
        <taxon>Alcaligenaceae</taxon>
        <taxon>Bordetella</taxon>
    </lineage>
</organism>
<sequence length="292" mass="30904">MAEITAALVKELREKTDAPMMECKKALTEAEGDLARAEEILRVKLGNKASKAAARVTAEGLIGLYIAADGKQGAVIEVNCETDFVAKNTDFIDFINKLAELVATQNPADVAALSALPFGEGTVETTRTALVGKIGENISVRRFERIQTPNSLASYVHGGKIGVLVEFSGAEEVGKDLAMHIAATKPKALNADGVNAEDIAAERSVAEQKAAESGKPAEIVAKMVEGSVQKFLKEVTLLSQPFVKNDKQTIEQMLKEKGASITKFVLFVVGEGIEKKTADFASEVAAAAAGRA</sequence>
<feature type="chain" id="PRO_0000161084" description="Elongation factor Ts">
    <location>
        <begin position="1"/>
        <end position="292"/>
    </location>
</feature>
<feature type="region of interest" description="Involved in Mg(2+) ion dislocation from EF-Tu" evidence="1">
    <location>
        <begin position="82"/>
        <end position="85"/>
    </location>
</feature>
<reference key="1">
    <citation type="journal article" date="2003" name="Nat. Genet.">
        <title>Comparative analysis of the genome sequences of Bordetella pertussis, Bordetella parapertussis and Bordetella bronchiseptica.</title>
        <authorList>
            <person name="Parkhill J."/>
            <person name="Sebaihia M."/>
            <person name="Preston A."/>
            <person name="Murphy L.D."/>
            <person name="Thomson N.R."/>
            <person name="Harris D.E."/>
            <person name="Holden M.T.G."/>
            <person name="Churcher C.M."/>
            <person name="Bentley S.D."/>
            <person name="Mungall K.L."/>
            <person name="Cerdeno-Tarraga A.-M."/>
            <person name="Temple L."/>
            <person name="James K.D."/>
            <person name="Harris B."/>
            <person name="Quail M.A."/>
            <person name="Achtman M."/>
            <person name="Atkin R."/>
            <person name="Baker S."/>
            <person name="Basham D."/>
            <person name="Bason N."/>
            <person name="Cherevach I."/>
            <person name="Chillingworth T."/>
            <person name="Collins M."/>
            <person name="Cronin A."/>
            <person name="Davis P."/>
            <person name="Doggett J."/>
            <person name="Feltwell T."/>
            <person name="Goble A."/>
            <person name="Hamlin N."/>
            <person name="Hauser H."/>
            <person name="Holroyd S."/>
            <person name="Jagels K."/>
            <person name="Leather S."/>
            <person name="Moule S."/>
            <person name="Norberczak H."/>
            <person name="O'Neil S."/>
            <person name="Ormond D."/>
            <person name="Price C."/>
            <person name="Rabbinowitsch E."/>
            <person name="Rutter S."/>
            <person name="Sanders M."/>
            <person name="Saunders D."/>
            <person name="Seeger K."/>
            <person name="Sharp S."/>
            <person name="Simmonds M."/>
            <person name="Skelton J."/>
            <person name="Squares R."/>
            <person name="Squares S."/>
            <person name="Stevens K."/>
            <person name="Unwin L."/>
            <person name="Whitehead S."/>
            <person name="Barrell B.G."/>
            <person name="Maskell D.J."/>
        </authorList>
    </citation>
    <scope>NUCLEOTIDE SEQUENCE [LARGE SCALE GENOMIC DNA]</scope>
    <source>
        <strain>ATCC BAA-588 / NCTC 13252 / RB50</strain>
    </source>
</reference>
<accession>Q7WJ93</accession>
<protein>
    <recommendedName>
        <fullName evidence="1">Elongation factor Ts</fullName>
        <shortName evidence="1">EF-Ts</shortName>
    </recommendedName>
</protein>
<gene>
    <name evidence="1" type="primary">tsf</name>
    <name type="ordered locus">BB2606</name>
</gene>